<accession>Q83QI6</accession>
<reference key="1">
    <citation type="journal article" date="2002" name="Nucleic Acids Res.">
        <title>Genome sequence of Shigella flexneri 2a: insights into pathogenicity through comparison with genomes of Escherichia coli K12 and O157.</title>
        <authorList>
            <person name="Jin Q."/>
            <person name="Yuan Z."/>
            <person name="Xu J."/>
            <person name="Wang Y."/>
            <person name="Shen Y."/>
            <person name="Lu W."/>
            <person name="Wang J."/>
            <person name="Liu H."/>
            <person name="Yang J."/>
            <person name="Yang F."/>
            <person name="Zhang X."/>
            <person name="Zhang J."/>
            <person name="Yang G."/>
            <person name="Wu H."/>
            <person name="Qu D."/>
            <person name="Dong J."/>
            <person name="Sun L."/>
            <person name="Xue Y."/>
            <person name="Zhao A."/>
            <person name="Gao Y."/>
            <person name="Zhu J."/>
            <person name="Kan B."/>
            <person name="Ding K."/>
            <person name="Chen S."/>
            <person name="Cheng H."/>
            <person name="Yao Z."/>
            <person name="He B."/>
            <person name="Chen R."/>
            <person name="Ma D."/>
            <person name="Qiang B."/>
            <person name="Wen Y."/>
            <person name="Hou Y."/>
            <person name="Yu J."/>
        </authorList>
    </citation>
    <scope>NUCLEOTIDE SEQUENCE [LARGE SCALE GENOMIC DNA]</scope>
    <source>
        <strain>301 / Serotype 2a</strain>
    </source>
</reference>
<reference key="2">
    <citation type="journal article" date="2003" name="Infect. Immun.">
        <title>Complete genome sequence and comparative genomics of Shigella flexneri serotype 2a strain 2457T.</title>
        <authorList>
            <person name="Wei J."/>
            <person name="Goldberg M.B."/>
            <person name="Burland V."/>
            <person name="Venkatesan M.M."/>
            <person name="Deng W."/>
            <person name="Fournier G."/>
            <person name="Mayhew G.F."/>
            <person name="Plunkett G. III"/>
            <person name="Rose D.J."/>
            <person name="Darling A."/>
            <person name="Mau B."/>
            <person name="Perna N.T."/>
            <person name="Payne S.M."/>
            <person name="Runyen-Janecky L.J."/>
            <person name="Zhou S."/>
            <person name="Schwartz D.C."/>
            <person name="Blattner F.R."/>
        </authorList>
    </citation>
    <scope>NUCLEOTIDE SEQUENCE [LARGE SCALE GENOMIC DNA]</scope>
    <source>
        <strain>ATCC 700930 / 2457T / Serotype 2a</strain>
    </source>
</reference>
<comment type="function">
    <text evidence="1">Involved in DNA repair and RecF pathway recombination.</text>
</comment>
<comment type="subunit">
    <text evidence="1">Monomer.</text>
</comment>
<comment type="similarity">
    <text evidence="1">Belongs to the RecO family.</text>
</comment>
<feature type="chain" id="PRO_0000204993" description="DNA repair protein RecO">
    <location>
        <begin position="1"/>
        <end position="242"/>
    </location>
</feature>
<organism>
    <name type="scientific">Shigella flexneri</name>
    <dbReference type="NCBI Taxonomy" id="623"/>
    <lineage>
        <taxon>Bacteria</taxon>
        <taxon>Pseudomonadati</taxon>
        <taxon>Pseudomonadota</taxon>
        <taxon>Gammaproteobacteria</taxon>
        <taxon>Enterobacterales</taxon>
        <taxon>Enterobacteriaceae</taxon>
        <taxon>Shigella</taxon>
    </lineage>
</organism>
<keyword id="KW-0227">DNA damage</keyword>
<keyword id="KW-0233">DNA recombination</keyword>
<keyword id="KW-0234">DNA repair</keyword>
<keyword id="KW-1185">Reference proteome</keyword>
<evidence type="ECO:0000255" key="1">
    <source>
        <dbReference type="HAMAP-Rule" id="MF_00201"/>
    </source>
</evidence>
<name>RECO_SHIFL</name>
<proteinExistence type="inferred from homology"/>
<gene>
    <name evidence="1" type="primary">recO</name>
    <name type="ordered locus">SF2627</name>
    <name type="ordered locus">S2800</name>
</gene>
<protein>
    <recommendedName>
        <fullName evidence="1">DNA repair protein RecO</fullName>
    </recommendedName>
    <alternativeName>
        <fullName evidence="1">Recombination protein O</fullName>
    </alternativeName>
</protein>
<dbReference type="EMBL" id="AE005674">
    <property type="protein sequence ID" value="AAN44124.1"/>
    <property type="molecule type" value="Genomic_DNA"/>
</dbReference>
<dbReference type="EMBL" id="AE014073">
    <property type="protein sequence ID" value="AAP17948.1"/>
    <property type="molecule type" value="Genomic_DNA"/>
</dbReference>
<dbReference type="RefSeq" id="NP_708417.1">
    <property type="nucleotide sequence ID" value="NC_004337.2"/>
</dbReference>
<dbReference type="RefSeq" id="WP_000399400.1">
    <property type="nucleotide sequence ID" value="NZ_WPGW01000044.1"/>
</dbReference>
<dbReference type="SMR" id="Q83QI6"/>
<dbReference type="STRING" id="198214.SF2627"/>
<dbReference type="PaxDb" id="198214-SF2627"/>
<dbReference type="GeneID" id="1025671"/>
<dbReference type="KEGG" id="sfl:SF2627"/>
<dbReference type="KEGG" id="sfx:S2800"/>
<dbReference type="PATRIC" id="fig|198214.7.peg.3135"/>
<dbReference type="HOGENOM" id="CLU_066645_1_0_6"/>
<dbReference type="Proteomes" id="UP000001006">
    <property type="component" value="Chromosome"/>
</dbReference>
<dbReference type="Proteomes" id="UP000002673">
    <property type="component" value="Chromosome"/>
</dbReference>
<dbReference type="GO" id="GO:0043590">
    <property type="term" value="C:bacterial nucleoid"/>
    <property type="evidence" value="ECO:0007669"/>
    <property type="project" value="TreeGrafter"/>
</dbReference>
<dbReference type="GO" id="GO:0006310">
    <property type="term" value="P:DNA recombination"/>
    <property type="evidence" value="ECO:0007669"/>
    <property type="project" value="UniProtKB-UniRule"/>
</dbReference>
<dbReference type="GO" id="GO:0006302">
    <property type="term" value="P:double-strand break repair"/>
    <property type="evidence" value="ECO:0007669"/>
    <property type="project" value="TreeGrafter"/>
</dbReference>
<dbReference type="FunFam" id="1.20.1440.120:FF:000001">
    <property type="entry name" value="DNA repair protein RecO"/>
    <property type="match status" value="1"/>
</dbReference>
<dbReference type="FunFam" id="2.40.50.140:FF:000074">
    <property type="entry name" value="DNA repair protein RecO"/>
    <property type="match status" value="1"/>
</dbReference>
<dbReference type="Gene3D" id="2.40.50.140">
    <property type="entry name" value="Nucleic acid-binding proteins"/>
    <property type="match status" value="1"/>
</dbReference>
<dbReference type="Gene3D" id="1.20.1440.120">
    <property type="entry name" value="Recombination protein O, C-terminal domain"/>
    <property type="match status" value="1"/>
</dbReference>
<dbReference type="HAMAP" id="MF_00201">
    <property type="entry name" value="RecO"/>
    <property type="match status" value="1"/>
</dbReference>
<dbReference type="InterPro" id="IPR037278">
    <property type="entry name" value="ARFGAP/RecO"/>
</dbReference>
<dbReference type="InterPro" id="IPR022572">
    <property type="entry name" value="DNA_rep/recomb_RecO_N"/>
</dbReference>
<dbReference type="InterPro" id="IPR012340">
    <property type="entry name" value="NA-bd_OB-fold"/>
</dbReference>
<dbReference type="InterPro" id="IPR003717">
    <property type="entry name" value="RecO"/>
</dbReference>
<dbReference type="InterPro" id="IPR042242">
    <property type="entry name" value="RecO_C"/>
</dbReference>
<dbReference type="NCBIfam" id="TIGR00613">
    <property type="entry name" value="reco"/>
    <property type="match status" value="1"/>
</dbReference>
<dbReference type="PANTHER" id="PTHR33991">
    <property type="entry name" value="DNA REPAIR PROTEIN RECO"/>
    <property type="match status" value="1"/>
</dbReference>
<dbReference type="PANTHER" id="PTHR33991:SF1">
    <property type="entry name" value="DNA REPAIR PROTEIN RECO"/>
    <property type="match status" value="1"/>
</dbReference>
<dbReference type="Pfam" id="PF02565">
    <property type="entry name" value="RecO_C"/>
    <property type="match status" value="1"/>
</dbReference>
<dbReference type="Pfam" id="PF11967">
    <property type="entry name" value="RecO_N"/>
    <property type="match status" value="1"/>
</dbReference>
<dbReference type="SUPFAM" id="SSF57863">
    <property type="entry name" value="ArfGap/RecO-like zinc finger"/>
    <property type="match status" value="1"/>
</dbReference>
<dbReference type="SUPFAM" id="SSF50249">
    <property type="entry name" value="Nucleic acid-binding proteins"/>
    <property type="match status" value="1"/>
</dbReference>
<sequence>MEGWQRAFVLHSRPWSETSLMLDVFTEESGRVRLVAKGARSKRSTLKGALQPFTPLLLRFGGRGEVKTLRSAEAVSLALPLSGITLYSGLYINELLSRVLEYETRFSELFFDYLHCIQSLAGDTGTPEPALRRFELALLGHLGYGVNFTHCAGSGEPVDGTMTYRYREEKGFIASVVIDNKTFTGRQLKALNAREFPDADTLRAAKRFTRMALKPYLGGKPLKSRELFRQFMPKRTVKTHYE</sequence>